<feature type="chain" id="PRO_1000001994" description="SsrA-binding protein">
    <location>
        <begin position="1"/>
        <end position="156"/>
    </location>
</feature>
<feature type="region of interest" description="Disordered" evidence="2">
    <location>
        <begin position="134"/>
        <end position="156"/>
    </location>
</feature>
<accession>A1R807</accession>
<protein>
    <recommendedName>
        <fullName evidence="1">SsrA-binding protein</fullName>
    </recommendedName>
    <alternativeName>
        <fullName evidence="1">Small protein B</fullName>
    </alternativeName>
</protein>
<evidence type="ECO:0000255" key="1">
    <source>
        <dbReference type="HAMAP-Rule" id="MF_00023"/>
    </source>
</evidence>
<evidence type="ECO:0000256" key="2">
    <source>
        <dbReference type="SAM" id="MobiDB-lite"/>
    </source>
</evidence>
<name>SSRP_PAEAT</name>
<sequence length="156" mass="18468">MPKESGRKVVATNRKARHNYHVMDTYEAGIALMGTEVKSLREGHASMVDGFCTFYNDELWMEGIHIPEYHQGSWTNHAARRRRKLLLHRDELDKISQKIRESGFTVVPLQLYFLDGRAKVEIAIARGKKDYDKRQTLREQQDKRESLRELRERNRR</sequence>
<reference key="1">
    <citation type="journal article" date="2006" name="PLoS Genet.">
        <title>Secrets of soil survival revealed by the genome sequence of Arthrobacter aurescens TC1.</title>
        <authorList>
            <person name="Mongodin E.F."/>
            <person name="Shapir N."/>
            <person name="Daugherty S.C."/>
            <person name="DeBoy R.T."/>
            <person name="Emerson J.B."/>
            <person name="Shvartzbeyn A."/>
            <person name="Radune D."/>
            <person name="Vamathevan J."/>
            <person name="Riggs F."/>
            <person name="Grinberg V."/>
            <person name="Khouri H.M."/>
            <person name="Wackett L.P."/>
            <person name="Nelson K.E."/>
            <person name="Sadowsky M.J."/>
        </authorList>
    </citation>
    <scope>NUCLEOTIDE SEQUENCE [LARGE SCALE GENOMIC DNA]</scope>
    <source>
        <strain>TC1</strain>
    </source>
</reference>
<gene>
    <name evidence="1" type="primary">smpB</name>
    <name type="ordered locus">AAur_2653</name>
</gene>
<organism>
    <name type="scientific">Paenarthrobacter aurescens (strain TC1)</name>
    <dbReference type="NCBI Taxonomy" id="290340"/>
    <lineage>
        <taxon>Bacteria</taxon>
        <taxon>Bacillati</taxon>
        <taxon>Actinomycetota</taxon>
        <taxon>Actinomycetes</taxon>
        <taxon>Micrococcales</taxon>
        <taxon>Micrococcaceae</taxon>
        <taxon>Paenarthrobacter</taxon>
    </lineage>
</organism>
<keyword id="KW-0963">Cytoplasm</keyword>
<keyword id="KW-0694">RNA-binding</keyword>
<proteinExistence type="inferred from homology"/>
<dbReference type="EMBL" id="CP000474">
    <property type="protein sequence ID" value="ABM07752.1"/>
    <property type="molecule type" value="Genomic_DNA"/>
</dbReference>
<dbReference type="RefSeq" id="WP_011775311.1">
    <property type="nucleotide sequence ID" value="NC_008711.1"/>
</dbReference>
<dbReference type="SMR" id="A1R807"/>
<dbReference type="STRING" id="290340.AAur_2653"/>
<dbReference type="KEGG" id="aau:AAur_2653"/>
<dbReference type="eggNOG" id="COG0691">
    <property type="taxonomic scope" value="Bacteria"/>
</dbReference>
<dbReference type="HOGENOM" id="CLU_108953_2_1_11"/>
<dbReference type="OrthoDB" id="9805462at2"/>
<dbReference type="Proteomes" id="UP000000637">
    <property type="component" value="Chromosome"/>
</dbReference>
<dbReference type="GO" id="GO:0005829">
    <property type="term" value="C:cytosol"/>
    <property type="evidence" value="ECO:0007669"/>
    <property type="project" value="TreeGrafter"/>
</dbReference>
<dbReference type="GO" id="GO:0003723">
    <property type="term" value="F:RNA binding"/>
    <property type="evidence" value="ECO:0007669"/>
    <property type="project" value="UniProtKB-UniRule"/>
</dbReference>
<dbReference type="GO" id="GO:0070929">
    <property type="term" value="P:trans-translation"/>
    <property type="evidence" value="ECO:0007669"/>
    <property type="project" value="UniProtKB-UniRule"/>
</dbReference>
<dbReference type="CDD" id="cd09294">
    <property type="entry name" value="SmpB"/>
    <property type="match status" value="1"/>
</dbReference>
<dbReference type="Gene3D" id="2.40.280.10">
    <property type="match status" value="1"/>
</dbReference>
<dbReference type="HAMAP" id="MF_00023">
    <property type="entry name" value="SmpB"/>
    <property type="match status" value="1"/>
</dbReference>
<dbReference type="InterPro" id="IPR023620">
    <property type="entry name" value="SmpB"/>
</dbReference>
<dbReference type="InterPro" id="IPR000037">
    <property type="entry name" value="SsrA-bd_prot"/>
</dbReference>
<dbReference type="InterPro" id="IPR020081">
    <property type="entry name" value="SsrA-bd_prot_CS"/>
</dbReference>
<dbReference type="NCBIfam" id="NF003843">
    <property type="entry name" value="PRK05422.1"/>
    <property type="match status" value="1"/>
</dbReference>
<dbReference type="NCBIfam" id="TIGR00086">
    <property type="entry name" value="smpB"/>
    <property type="match status" value="1"/>
</dbReference>
<dbReference type="PANTHER" id="PTHR30308:SF2">
    <property type="entry name" value="SSRA-BINDING PROTEIN"/>
    <property type="match status" value="1"/>
</dbReference>
<dbReference type="PANTHER" id="PTHR30308">
    <property type="entry name" value="TMRNA-BINDING COMPONENT OF TRANS-TRANSLATION TAGGING COMPLEX"/>
    <property type="match status" value="1"/>
</dbReference>
<dbReference type="Pfam" id="PF01668">
    <property type="entry name" value="SmpB"/>
    <property type="match status" value="1"/>
</dbReference>
<dbReference type="SUPFAM" id="SSF74982">
    <property type="entry name" value="Small protein B (SmpB)"/>
    <property type="match status" value="1"/>
</dbReference>
<dbReference type="PROSITE" id="PS01317">
    <property type="entry name" value="SSRP"/>
    <property type="match status" value="1"/>
</dbReference>
<comment type="function">
    <text evidence="1">Required for rescue of stalled ribosomes mediated by trans-translation. Binds to transfer-messenger RNA (tmRNA), required for stable association of tmRNA with ribosomes. tmRNA and SmpB together mimic tRNA shape, replacing the anticodon stem-loop with SmpB. tmRNA is encoded by the ssrA gene; the 2 termini fold to resemble tRNA(Ala) and it encodes a 'tag peptide', a short internal open reading frame. During trans-translation Ala-aminoacylated tmRNA acts like a tRNA, entering the A-site of stalled ribosomes, displacing the stalled mRNA. The ribosome then switches to translate the ORF on the tmRNA; the nascent peptide is terminated with the 'tag peptide' encoded by the tmRNA and targeted for degradation. The ribosome is freed to recommence translation, which seems to be the essential function of trans-translation.</text>
</comment>
<comment type="subcellular location">
    <subcellularLocation>
        <location evidence="1">Cytoplasm</location>
    </subcellularLocation>
    <text evidence="1">The tmRNA-SmpB complex associates with stalled 70S ribosomes.</text>
</comment>
<comment type="similarity">
    <text evidence="1">Belongs to the SmpB family.</text>
</comment>